<name>YR040_MIMIV</name>
<proteinExistence type="predicted"/>
<dbReference type="EMBL" id="AY653733">
    <property type="protein sequence ID" value="AAV50315.1"/>
    <property type="molecule type" value="Genomic_DNA"/>
</dbReference>
<dbReference type="SMR" id="Q5UPC1"/>
<dbReference type="KEGG" id="vg:9924623"/>
<dbReference type="Proteomes" id="UP000001134">
    <property type="component" value="Genome"/>
</dbReference>
<dbReference type="GO" id="GO:0016020">
    <property type="term" value="C:membrane"/>
    <property type="evidence" value="ECO:0007669"/>
    <property type="project" value="UniProtKB-SubCell"/>
</dbReference>
<organismHost>
    <name type="scientific">Acanthamoeba polyphaga</name>
    <name type="common">Amoeba</name>
    <dbReference type="NCBI Taxonomy" id="5757"/>
</organismHost>
<feature type="chain" id="PRO_0000253257" description="Uncharacterized protein R40">
    <location>
        <begin position="1"/>
        <end position="101"/>
    </location>
</feature>
<feature type="transmembrane region" description="Helical" evidence="1">
    <location>
        <begin position="10"/>
        <end position="30"/>
    </location>
</feature>
<feature type="transmembrane region" description="Helical" evidence="1">
    <location>
        <begin position="67"/>
        <end position="87"/>
    </location>
</feature>
<evidence type="ECO:0000255" key="1"/>
<evidence type="ECO:0000305" key="2"/>
<keyword id="KW-0472">Membrane</keyword>
<keyword id="KW-1185">Reference proteome</keyword>
<keyword id="KW-0812">Transmembrane</keyword>
<keyword id="KW-1133">Transmembrane helix</keyword>
<gene>
    <name type="ordered locus">MIMI_R40</name>
</gene>
<reference key="1">
    <citation type="journal article" date="2004" name="Science">
        <title>The 1.2-megabase genome sequence of Mimivirus.</title>
        <authorList>
            <person name="Raoult D."/>
            <person name="Audic S."/>
            <person name="Robert C."/>
            <person name="Abergel C."/>
            <person name="Renesto P."/>
            <person name="Ogata H."/>
            <person name="La Scola B."/>
            <person name="Susan M."/>
            <person name="Claverie J.-M."/>
        </authorList>
    </citation>
    <scope>NUCLEOTIDE SEQUENCE [LARGE SCALE GENOMIC DNA]</scope>
    <source>
        <strain>Rowbotham-Bradford</strain>
    </source>
</reference>
<comment type="subcellular location">
    <subcellularLocation>
        <location evidence="2">Membrane</location>
        <topology evidence="2">Multi-pass membrane protein</topology>
    </subcellularLocation>
</comment>
<accession>Q5UPC1</accession>
<protein>
    <recommendedName>
        <fullName>Uncharacterized protein R40</fullName>
    </recommendedName>
</protein>
<sequence>MENNNFRDSVLAILVCQFIGPNVFIIIGSIGSVIGVKIMEMYPHYCENHGIYIDKTSVGIAHGIYGIILGFIGIYVFLFVLLFILSIIFSIIYVISKRLSS</sequence>
<organism>
    <name type="scientific">Acanthamoeba polyphaga mimivirus</name>
    <name type="common">APMV</name>
    <dbReference type="NCBI Taxonomy" id="212035"/>
    <lineage>
        <taxon>Viruses</taxon>
        <taxon>Varidnaviria</taxon>
        <taxon>Bamfordvirae</taxon>
        <taxon>Nucleocytoviricota</taxon>
        <taxon>Megaviricetes</taxon>
        <taxon>Imitervirales</taxon>
        <taxon>Mimiviridae</taxon>
        <taxon>Megamimivirinae</taxon>
        <taxon>Mimivirus</taxon>
        <taxon>Mimivirus bradfordmassiliense</taxon>
    </lineage>
</organism>